<dbReference type="EMBL" id="S65451">
    <property type="protein sequence ID" value="AAB28155.1"/>
    <property type="molecule type" value="mRNA"/>
</dbReference>
<dbReference type="EMBL" id="CH672350">
    <property type="protein sequence ID" value="EEQ45929.1"/>
    <property type="molecule type" value="Genomic_DNA"/>
</dbReference>
<dbReference type="PIR" id="JN0802">
    <property type="entry name" value="JN0802"/>
</dbReference>
<dbReference type="SMR" id="P43074"/>
<dbReference type="PaxDb" id="5476-P43074"/>
<dbReference type="VEuPathDB" id="FungiDB:CAWG_04270"/>
<dbReference type="HOGENOM" id="CLU_102617_3_1_1"/>
<dbReference type="OMA" id="DNQKSYS"/>
<dbReference type="OrthoDB" id="9651at766764"/>
<dbReference type="Proteomes" id="UP000001429">
    <property type="component" value="Chromosome 2, Supercontig 1.5"/>
</dbReference>
<dbReference type="Gene3D" id="6.10.280.100">
    <property type="match status" value="1"/>
</dbReference>
<dbReference type="InterPro" id="IPR007250">
    <property type="entry name" value="HSP9_HSP12"/>
</dbReference>
<dbReference type="Pfam" id="PF04119">
    <property type="entry name" value="HSP9_HSP12"/>
    <property type="match status" value="1"/>
</dbReference>
<dbReference type="PIRSF" id="PIRSF002590">
    <property type="entry name" value="HSP9/HSP12_fun"/>
    <property type="match status" value="1"/>
</dbReference>
<reference key="1">
    <citation type="journal article" date="1993" name="Gene">
        <title>A white-specific gene in the white-opaque switching system of Candida albicans.</title>
        <authorList>
            <person name="Srikantha T."/>
            <person name="Soll D.R."/>
        </authorList>
    </citation>
    <scope>NUCLEOTIDE SEQUENCE [MRNA]</scope>
    <source>
        <strain>WO-1</strain>
    </source>
</reference>
<reference key="2">
    <citation type="journal article" date="2009" name="Nature">
        <title>Evolution of pathogenicity and sexual reproduction in eight Candida genomes.</title>
        <authorList>
            <person name="Butler G."/>
            <person name="Rasmussen M.D."/>
            <person name="Lin M.F."/>
            <person name="Santos M.A.S."/>
            <person name="Sakthikumar S."/>
            <person name="Munro C.A."/>
            <person name="Rheinbay E."/>
            <person name="Grabherr M."/>
            <person name="Forche A."/>
            <person name="Reedy J.L."/>
            <person name="Agrafioti I."/>
            <person name="Arnaud M.B."/>
            <person name="Bates S."/>
            <person name="Brown A.J.P."/>
            <person name="Brunke S."/>
            <person name="Costanzo M.C."/>
            <person name="Fitzpatrick D.A."/>
            <person name="de Groot P.W.J."/>
            <person name="Harris D."/>
            <person name="Hoyer L.L."/>
            <person name="Hube B."/>
            <person name="Klis F.M."/>
            <person name="Kodira C."/>
            <person name="Lennard N."/>
            <person name="Logue M.E."/>
            <person name="Martin R."/>
            <person name="Neiman A.M."/>
            <person name="Nikolaou E."/>
            <person name="Quail M.A."/>
            <person name="Quinn J."/>
            <person name="Santos M.C."/>
            <person name="Schmitzberger F.F."/>
            <person name="Sherlock G."/>
            <person name="Shah P."/>
            <person name="Silverstein K.A.T."/>
            <person name="Skrzypek M.S."/>
            <person name="Soll D."/>
            <person name="Staggs R."/>
            <person name="Stansfield I."/>
            <person name="Stumpf M.P.H."/>
            <person name="Sudbery P.E."/>
            <person name="Srikantha T."/>
            <person name="Zeng Q."/>
            <person name="Berman J."/>
            <person name="Berriman M."/>
            <person name="Heitman J."/>
            <person name="Gow N.A.R."/>
            <person name="Lorenz M.C."/>
            <person name="Birren B.W."/>
            <person name="Kellis M."/>
            <person name="Cuomo C.A."/>
        </authorList>
    </citation>
    <scope>NUCLEOTIDE SEQUENCE [LARGE SCALE GENOMIC DNA]</scope>
    <source>
        <strain>WO-1</strain>
    </source>
</reference>
<organism>
    <name type="scientific">Candida albicans (strain WO-1)</name>
    <name type="common">Yeast</name>
    <dbReference type="NCBI Taxonomy" id="294748"/>
    <lineage>
        <taxon>Eukaryota</taxon>
        <taxon>Fungi</taxon>
        <taxon>Dikarya</taxon>
        <taxon>Ascomycota</taxon>
        <taxon>Saccharomycotina</taxon>
        <taxon>Pichiomycetes</taxon>
        <taxon>Debaryomycetaceae</taxon>
        <taxon>Candida/Lodderomyces clade</taxon>
        <taxon>Candida</taxon>
    </lineage>
</organism>
<sequence>MSDLGRKDIGDKIESKLTPDSQKSTPEQFKDKVTDSLDSAAGKATSENDKSFVQKASDAIFGDSK</sequence>
<protein>
    <recommendedName>
        <fullName>White colony protein WHS11</fullName>
    </recommendedName>
</protein>
<comment type="induction">
    <text>By temperature-induced mass conversion from opaque to white colonies. WH11 is abruptly activated at the second cell doubling.</text>
</comment>
<comment type="similarity">
    <text evidence="2">To yeast HSP12/GLP1 and S.pombe hsp9.</text>
</comment>
<proteinExistence type="evidence at transcript level"/>
<gene>
    <name type="primary">WHS11</name>
    <name type="synonym">WH11</name>
    <name type="ORF">CAWG_04270</name>
</gene>
<evidence type="ECO:0000256" key="1">
    <source>
        <dbReference type="SAM" id="MobiDB-lite"/>
    </source>
</evidence>
<evidence type="ECO:0000305" key="2"/>
<feature type="chain" id="PRO_0000065971" description="White colony protein WHS11">
    <location>
        <begin position="1"/>
        <end position="65"/>
    </location>
</feature>
<feature type="region of interest" description="Disordered" evidence="1">
    <location>
        <begin position="1"/>
        <end position="32"/>
    </location>
</feature>
<feature type="compositionally biased region" description="Basic and acidic residues" evidence="1">
    <location>
        <begin position="1"/>
        <end position="17"/>
    </location>
</feature>
<feature type="compositionally biased region" description="Polar residues" evidence="1">
    <location>
        <begin position="18"/>
        <end position="27"/>
    </location>
</feature>
<name>WHS11_CANAW</name>
<accession>P43074</accession>
<accession>C4YIJ4</accession>
<keyword id="KW-0346">Stress response</keyword>